<gene>
    <name evidence="1" type="primary">ydiU</name>
    <name evidence="1" type="synonym">selO</name>
    <name type="ordered locus">RSKD131_0687</name>
</gene>
<keyword id="KW-0067">ATP-binding</keyword>
<keyword id="KW-0460">Magnesium</keyword>
<keyword id="KW-0464">Manganese</keyword>
<keyword id="KW-0479">Metal-binding</keyword>
<keyword id="KW-0547">Nucleotide-binding</keyword>
<keyword id="KW-0548">Nucleotidyltransferase</keyword>
<keyword id="KW-0808">Transferase</keyword>
<evidence type="ECO:0000255" key="1">
    <source>
        <dbReference type="HAMAP-Rule" id="MF_00692"/>
    </source>
</evidence>
<dbReference type="EC" id="2.7.7.-" evidence="1"/>
<dbReference type="EC" id="2.7.7.108" evidence="1"/>
<dbReference type="EMBL" id="CP001150">
    <property type="protein sequence ID" value="ACM00547.1"/>
    <property type="molecule type" value="Genomic_DNA"/>
</dbReference>
<dbReference type="RefSeq" id="WP_012643887.1">
    <property type="nucleotide sequence ID" value="NC_011963.1"/>
</dbReference>
<dbReference type="SMR" id="B9KQ40"/>
<dbReference type="GeneID" id="67446135"/>
<dbReference type="KEGG" id="rsk:RSKD131_0687"/>
<dbReference type="HOGENOM" id="CLU_010245_4_1_5"/>
<dbReference type="GO" id="GO:0070733">
    <property type="term" value="F:AMPylase activity"/>
    <property type="evidence" value="ECO:0007669"/>
    <property type="project" value="TreeGrafter"/>
</dbReference>
<dbReference type="GO" id="GO:0005524">
    <property type="term" value="F:ATP binding"/>
    <property type="evidence" value="ECO:0007669"/>
    <property type="project" value="UniProtKB-UniRule"/>
</dbReference>
<dbReference type="GO" id="GO:0000287">
    <property type="term" value="F:magnesium ion binding"/>
    <property type="evidence" value="ECO:0007669"/>
    <property type="project" value="UniProtKB-UniRule"/>
</dbReference>
<dbReference type="HAMAP" id="MF_00692">
    <property type="entry name" value="YdiU_SelO"/>
    <property type="match status" value="1"/>
</dbReference>
<dbReference type="InterPro" id="IPR003846">
    <property type="entry name" value="SelO"/>
</dbReference>
<dbReference type="NCBIfam" id="NF000658">
    <property type="entry name" value="PRK00029.1"/>
    <property type="match status" value="1"/>
</dbReference>
<dbReference type="PANTHER" id="PTHR32057">
    <property type="entry name" value="PROTEIN ADENYLYLTRANSFERASE SELO, MITOCHONDRIAL"/>
    <property type="match status" value="1"/>
</dbReference>
<dbReference type="PANTHER" id="PTHR32057:SF14">
    <property type="entry name" value="PROTEIN ADENYLYLTRANSFERASE SELO, MITOCHONDRIAL"/>
    <property type="match status" value="1"/>
</dbReference>
<dbReference type="Pfam" id="PF02696">
    <property type="entry name" value="SelO"/>
    <property type="match status" value="1"/>
</dbReference>
<protein>
    <recommendedName>
        <fullName evidence="1">Protein nucleotidyltransferase YdiU</fullName>
        <ecNumber evidence="1">2.7.7.-</ecNumber>
    </recommendedName>
    <alternativeName>
        <fullName evidence="1">Protein adenylyltransferase YdiU</fullName>
        <ecNumber evidence="1">2.7.7.108</ecNumber>
    </alternativeName>
    <alternativeName>
        <fullName evidence="1">Protein uridylyltransferase YdiU</fullName>
        <ecNumber evidence="1">2.7.7.-</ecNumber>
    </alternativeName>
</protein>
<sequence length="481" mass="52932">MTFRFDNSYARDLEGFYVDWPAAPVPAPRLLRLNRPLAEELGLDPDLLEREGAEIFSGRRLPEGAHPLAQAYAGHQFGGFSPQLGDGRALLIGEITDRAGRRRDLQLKGSGRTPFSRGADGKAALGPVLREYLVGEAMHGLGIPTTRALAAVATGEPLLRQEGERPGAILTRVAASHIRVGTFQFFAARSDIDRVRRLADYAIARHYPELASAPEPYLAFYEAVAEAQAQLVARWMLVGFIHGVMNTDNMTISGETIDYGPCAFMEGYDPGTVFSSIDLQGRYAYGNQPYILAWNLARLGEALLPLLDADAERATDKANSVLETVGARYQGHWLAGMRAKLGLAGAEEGDARLAEDLLEAMRNQRADWTLTFRRLAEAVTDEGTLRPLFRDPAALEAWLPRWRARLAPDAAERMRATNPIYIARNHRVEEALAAAHAGDLAPFDRLLEALADPFTERADRELFALPAPEGFDDSYRTFCGT</sequence>
<proteinExistence type="inferred from homology"/>
<reference key="1">
    <citation type="journal article" date="2009" name="J. Bacteriol.">
        <title>Complete genome sequence of Rhodobacter sphaeroides KD131.</title>
        <authorList>
            <person name="Lim S.-K."/>
            <person name="Kim S.J."/>
            <person name="Cha S.H."/>
            <person name="Oh Y.-K."/>
            <person name="Rhee H.-J."/>
            <person name="Kim M.-S."/>
            <person name="Lee J.K."/>
        </authorList>
    </citation>
    <scope>NUCLEOTIDE SEQUENCE [LARGE SCALE GENOMIC DNA]</scope>
    <source>
        <strain>KD131 / KCTC 12085</strain>
    </source>
</reference>
<name>SELO_CERSK</name>
<organism>
    <name type="scientific">Cereibacter sphaeroides (strain KD131 / KCTC 12085)</name>
    <name type="common">Rhodobacter sphaeroides</name>
    <dbReference type="NCBI Taxonomy" id="557760"/>
    <lineage>
        <taxon>Bacteria</taxon>
        <taxon>Pseudomonadati</taxon>
        <taxon>Pseudomonadota</taxon>
        <taxon>Alphaproteobacteria</taxon>
        <taxon>Rhodobacterales</taxon>
        <taxon>Paracoccaceae</taxon>
        <taxon>Cereibacter</taxon>
    </lineage>
</organism>
<accession>B9KQ40</accession>
<feature type="chain" id="PRO_1000200064" description="Protein nucleotidyltransferase YdiU">
    <location>
        <begin position="1"/>
        <end position="481"/>
    </location>
</feature>
<feature type="active site" description="Proton acceptor" evidence="1">
    <location>
        <position position="248"/>
    </location>
</feature>
<feature type="binding site" evidence="1">
    <location>
        <position position="85"/>
    </location>
    <ligand>
        <name>ATP</name>
        <dbReference type="ChEBI" id="CHEBI:30616"/>
    </ligand>
</feature>
<feature type="binding site" evidence="1">
    <location>
        <position position="87"/>
    </location>
    <ligand>
        <name>ATP</name>
        <dbReference type="ChEBI" id="CHEBI:30616"/>
    </ligand>
</feature>
<feature type="binding site" evidence="1">
    <location>
        <position position="88"/>
    </location>
    <ligand>
        <name>ATP</name>
        <dbReference type="ChEBI" id="CHEBI:30616"/>
    </ligand>
</feature>
<feature type="binding site" evidence="1">
    <location>
        <position position="108"/>
    </location>
    <ligand>
        <name>ATP</name>
        <dbReference type="ChEBI" id="CHEBI:30616"/>
    </ligand>
</feature>
<feature type="binding site" evidence="1">
    <location>
        <position position="120"/>
    </location>
    <ligand>
        <name>ATP</name>
        <dbReference type="ChEBI" id="CHEBI:30616"/>
    </ligand>
</feature>
<feature type="binding site" evidence="1">
    <location>
        <position position="121"/>
    </location>
    <ligand>
        <name>ATP</name>
        <dbReference type="ChEBI" id="CHEBI:30616"/>
    </ligand>
</feature>
<feature type="binding site" evidence="1">
    <location>
        <position position="172"/>
    </location>
    <ligand>
        <name>ATP</name>
        <dbReference type="ChEBI" id="CHEBI:30616"/>
    </ligand>
</feature>
<feature type="binding site" evidence="1">
    <location>
        <position position="179"/>
    </location>
    <ligand>
        <name>ATP</name>
        <dbReference type="ChEBI" id="CHEBI:30616"/>
    </ligand>
</feature>
<feature type="binding site" evidence="1">
    <location>
        <position position="249"/>
    </location>
    <ligand>
        <name>Mg(2+)</name>
        <dbReference type="ChEBI" id="CHEBI:18420"/>
    </ligand>
</feature>
<feature type="binding site" evidence="1">
    <location>
        <position position="258"/>
    </location>
    <ligand>
        <name>ATP</name>
        <dbReference type="ChEBI" id="CHEBI:30616"/>
    </ligand>
</feature>
<feature type="binding site" evidence="1">
    <location>
        <position position="258"/>
    </location>
    <ligand>
        <name>Mg(2+)</name>
        <dbReference type="ChEBI" id="CHEBI:18420"/>
    </ligand>
</feature>
<comment type="function">
    <text evidence="1">Nucleotidyltransferase involved in the post-translational modification of proteins. It can catalyze the addition of adenosine monophosphate (AMP) or uridine monophosphate (UMP) to a protein, resulting in modifications known as AMPylation and UMPylation.</text>
</comment>
<comment type="catalytic activity">
    <reaction evidence="1">
        <text>L-seryl-[protein] + ATP = 3-O-(5'-adenylyl)-L-seryl-[protein] + diphosphate</text>
        <dbReference type="Rhea" id="RHEA:58120"/>
        <dbReference type="Rhea" id="RHEA-COMP:9863"/>
        <dbReference type="Rhea" id="RHEA-COMP:15073"/>
        <dbReference type="ChEBI" id="CHEBI:29999"/>
        <dbReference type="ChEBI" id="CHEBI:30616"/>
        <dbReference type="ChEBI" id="CHEBI:33019"/>
        <dbReference type="ChEBI" id="CHEBI:142516"/>
        <dbReference type="EC" id="2.7.7.108"/>
    </reaction>
</comment>
<comment type="catalytic activity">
    <reaction evidence="1">
        <text>L-threonyl-[protein] + ATP = 3-O-(5'-adenylyl)-L-threonyl-[protein] + diphosphate</text>
        <dbReference type="Rhea" id="RHEA:54292"/>
        <dbReference type="Rhea" id="RHEA-COMP:11060"/>
        <dbReference type="Rhea" id="RHEA-COMP:13847"/>
        <dbReference type="ChEBI" id="CHEBI:30013"/>
        <dbReference type="ChEBI" id="CHEBI:30616"/>
        <dbReference type="ChEBI" id="CHEBI:33019"/>
        <dbReference type="ChEBI" id="CHEBI:138113"/>
        <dbReference type="EC" id="2.7.7.108"/>
    </reaction>
</comment>
<comment type="catalytic activity">
    <reaction evidence="1">
        <text>L-tyrosyl-[protein] + ATP = O-(5'-adenylyl)-L-tyrosyl-[protein] + diphosphate</text>
        <dbReference type="Rhea" id="RHEA:54288"/>
        <dbReference type="Rhea" id="RHEA-COMP:10136"/>
        <dbReference type="Rhea" id="RHEA-COMP:13846"/>
        <dbReference type="ChEBI" id="CHEBI:30616"/>
        <dbReference type="ChEBI" id="CHEBI:33019"/>
        <dbReference type="ChEBI" id="CHEBI:46858"/>
        <dbReference type="ChEBI" id="CHEBI:83624"/>
        <dbReference type="EC" id="2.7.7.108"/>
    </reaction>
</comment>
<comment type="catalytic activity">
    <reaction evidence="1">
        <text>L-histidyl-[protein] + UTP = N(tele)-(5'-uridylyl)-L-histidyl-[protein] + diphosphate</text>
        <dbReference type="Rhea" id="RHEA:83891"/>
        <dbReference type="Rhea" id="RHEA-COMP:9745"/>
        <dbReference type="Rhea" id="RHEA-COMP:20239"/>
        <dbReference type="ChEBI" id="CHEBI:29979"/>
        <dbReference type="ChEBI" id="CHEBI:33019"/>
        <dbReference type="ChEBI" id="CHEBI:46398"/>
        <dbReference type="ChEBI" id="CHEBI:233474"/>
    </reaction>
</comment>
<comment type="catalytic activity">
    <reaction evidence="1">
        <text>L-seryl-[protein] + UTP = O-(5'-uridylyl)-L-seryl-[protein] + diphosphate</text>
        <dbReference type="Rhea" id="RHEA:64604"/>
        <dbReference type="Rhea" id="RHEA-COMP:9863"/>
        <dbReference type="Rhea" id="RHEA-COMP:16635"/>
        <dbReference type="ChEBI" id="CHEBI:29999"/>
        <dbReference type="ChEBI" id="CHEBI:33019"/>
        <dbReference type="ChEBI" id="CHEBI:46398"/>
        <dbReference type="ChEBI" id="CHEBI:156051"/>
    </reaction>
</comment>
<comment type="catalytic activity">
    <reaction evidence="1">
        <text>L-tyrosyl-[protein] + UTP = O-(5'-uridylyl)-L-tyrosyl-[protein] + diphosphate</text>
        <dbReference type="Rhea" id="RHEA:83887"/>
        <dbReference type="Rhea" id="RHEA-COMP:10136"/>
        <dbReference type="Rhea" id="RHEA-COMP:20238"/>
        <dbReference type="ChEBI" id="CHEBI:33019"/>
        <dbReference type="ChEBI" id="CHEBI:46398"/>
        <dbReference type="ChEBI" id="CHEBI:46858"/>
        <dbReference type="ChEBI" id="CHEBI:90602"/>
    </reaction>
</comment>
<comment type="cofactor">
    <cofactor evidence="1">
        <name>Mg(2+)</name>
        <dbReference type="ChEBI" id="CHEBI:18420"/>
    </cofactor>
    <cofactor evidence="1">
        <name>Mn(2+)</name>
        <dbReference type="ChEBI" id="CHEBI:29035"/>
    </cofactor>
</comment>
<comment type="similarity">
    <text evidence="1">Belongs to the SELO family.</text>
</comment>